<proteinExistence type="inferred from homology"/>
<accession>A5A4L4</accession>
<dbReference type="EMBL" id="EF526509">
    <property type="protein sequence ID" value="ABP63560.1"/>
    <property type="molecule type" value="Genomic_DNA"/>
</dbReference>
<dbReference type="EMBL" id="GQ903577">
    <property type="protein sequence ID" value="ACX46978.1"/>
    <property type="molecule type" value="Genomic_DNA"/>
</dbReference>
<dbReference type="EMBL" id="HM027636">
    <property type="protein sequence ID" value="ADG45758.1"/>
    <property type="molecule type" value="Genomic_DNA"/>
</dbReference>
<dbReference type="EMBL" id="HM027637">
    <property type="protein sequence ID" value="ADG45759.1"/>
    <property type="molecule type" value="Genomic_DNA"/>
</dbReference>
<dbReference type="RefSeq" id="NP_001414859.1">
    <property type="nucleotide sequence ID" value="NM_001427930.1"/>
</dbReference>
<dbReference type="SMR" id="A5A4L4"/>
<dbReference type="EnsemblPlants" id="TraesARI7D03G04355260.1">
    <property type="protein sequence ID" value="TraesARI7D03G04355260.1.CDS1"/>
    <property type="gene ID" value="TraesARI7D03G04355260"/>
</dbReference>
<dbReference type="EnsemblPlants" id="TraesCAD_scaffold_012981_01G000200.1">
    <property type="protein sequence ID" value="TraesCAD_scaffold_012981_01G000200.1"/>
    <property type="gene ID" value="TraesCAD_scaffold_012981_01G000200"/>
</dbReference>
<dbReference type="EnsemblPlants" id="TraesCLE_scaffold_012212_01G001200.1">
    <property type="protein sequence ID" value="TraesCLE_scaffold_012212_01G001200.1"/>
    <property type="gene ID" value="TraesCLE_scaffold_012212_01G001200"/>
</dbReference>
<dbReference type="EnsemblPlants" id="TraesCS7D02G031700.1">
    <property type="protein sequence ID" value="TraesCS7D02G031700.1.cds1"/>
    <property type="gene ID" value="TraesCS7D02G031700"/>
</dbReference>
<dbReference type="EnsemblPlants" id="TraesCS7D03G0072700.1">
    <property type="protein sequence ID" value="TraesCS7D03G0072700.1.CDS1"/>
    <property type="gene ID" value="TraesCS7D03G0072700"/>
</dbReference>
<dbReference type="EnsemblPlants" id="TraesJAG7D03G04263650.1">
    <property type="protein sequence ID" value="TraesJAG7D03G04263650.1.CDS1"/>
    <property type="gene ID" value="TraesJAG7D03G04263650"/>
</dbReference>
<dbReference type="EnsemblPlants" id="TraesJUL7D03G04323830.1">
    <property type="protein sequence ID" value="TraesJUL7D03G04323830.1.CDS1"/>
    <property type="gene ID" value="TraesJUL7D03G04323830"/>
</dbReference>
<dbReference type="EnsemblPlants" id="TraesKAR7D01G0013520.1">
    <property type="protein sequence ID" value="cds.TraesKAR7D01G0013520.1"/>
    <property type="gene ID" value="TraesKAR7D01G0013520"/>
</dbReference>
<dbReference type="EnsemblPlants" id="TraesLAC7D03G04227180.1">
    <property type="protein sequence ID" value="TraesLAC7D03G04227180.1.CDS1"/>
    <property type="gene ID" value="TraesLAC7D03G04227180"/>
</dbReference>
<dbReference type="EnsemblPlants" id="TraesLDM7D03G04286100.1">
    <property type="protein sequence ID" value="TraesLDM7D03G04286100.1.CDS1"/>
    <property type="gene ID" value="TraesLDM7D03G04286100"/>
</dbReference>
<dbReference type="EnsemblPlants" id="TraesMAC7D03G04272630.1">
    <property type="protein sequence ID" value="TraesMAC7D03G04272630.1.CDS1"/>
    <property type="gene ID" value="TraesMAC7D03G04272630"/>
</dbReference>
<dbReference type="EnsemblPlants" id="TraesNOR7D03G04328810.1">
    <property type="protein sequence ID" value="TraesNOR7D03G04328810.1.CDS1"/>
    <property type="gene ID" value="TraesNOR7D03G04328810"/>
</dbReference>
<dbReference type="EnsemblPlants" id="TraesPARA_EIv1.0_2510310.1">
    <property type="protein sequence ID" value="TraesPARA_EIv1.0_2510310.1.CDS1"/>
    <property type="gene ID" value="TraesPARA_EIv1.0_2510310"/>
</dbReference>
<dbReference type="EnsemblPlants" id="TraesROB_scaffold_121866_01G000200.1">
    <property type="protein sequence ID" value="TraesROB_scaffold_121866_01G000200.1"/>
    <property type="gene ID" value="TraesROB_scaffold_121866_01G000200"/>
</dbReference>
<dbReference type="EnsemblPlants" id="TraesSTA7D03G04274040.1">
    <property type="protein sequence ID" value="TraesSTA7D03G04274040.1.CDS1"/>
    <property type="gene ID" value="TraesSTA7D03G04274040"/>
</dbReference>
<dbReference type="EnsemblPlants" id="TraesSYM7D03G04333760.1">
    <property type="protein sequence ID" value="TraesSYM7D03G04333760.1.CDS1"/>
    <property type="gene ID" value="TraesSYM7D03G04333760"/>
</dbReference>
<dbReference type="EnsemblPlants" id="TraesWEE_scaffold_113321_01G000200.1">
    <property type="protein sequence ID" value="TraesWEE_scaffold_113321_01G000200.1"/>
    <property type="gene ID" value="TraesWEE_scaffold_113321_01G000200"/>
</dbReference>
<dbReference type="GeneID" id="542895"/>
<dbReference type="Gramene" id="TraesARI7D03G04355260.1">
    <property type="protein sequence ID" value="TraesARI7D03G04355260.1.CDS1"/>
    <property type="gene ID" value="TraesARI7D03G04355260"/>
</dbReference>
<dbReference type="Gramene" id="TraesCAD_scaffold_012981_01G000200.1">
    <property type="protein sequence ID" value="TraesCAD_scaffold_012981_01G000200.1"/>
    <property type="gene ID" value="TraesCAD_scaffold_012981_01G000200"/>
</dbReference>
<dbReference type="Gramene" id="TraesCLE_scaffold_012212_01G001200.1">
    <property type="protein sequence ID" value="TraesCLE_scaffold_012212_01G001200.1"/>
    <property type="gene ID" value="TraesCLE_scaffold_012212_01G001200"/>
</dbReference>
<dbReference type="Gramene" id="TraesCS7D02G031700.1">
    <property type="protein sequence ID" value="TraesCS7D02G031700.1.cds1"/>
    <property type="gene ID" value="TraesCS7D02G031700"/>
</dbReference>
<dbReference type="Gramene" id="TraesCS7D03G0072700.1">
    <property type="protein sequence ID" value="TraesCS7D03G0072700.1.CDS1"/>
    <property type="gene ID" value="TraesCS7D03G0072700"/>
</dbReference>
<dbReference type="Gramene" id="TraesJAG7D03G04263650.1">
    <property type="protein sequence ID" value="TraesJAG7D03G04263650.1.CDS1"/>
    <property type="gene ID" value="TraesJAG7D03G04263650"/>
</dbReference>
<dbReference type="Gramene" id="TraesJUL7D03G04323830.1">
    <property type="protein sequence ID" value="TraesJUL7D03G04323830.1.CDS1"/>
    <property type="gene ID" value="TraesJUL7D03G04323830"/>
</dbReference>
<dbReference type="Gramene" id="TraesKAR7D01G0013520.1">
    <property type="protein sequence ID" value="cds.TraesKAR7D01G0013520.1"/>
    <property type="gene ID" value="TraesKAR7D01G0013520"/>
</dbReference>
<dbReference type="Gramene" id="TraesLAC7D03G04227180.1">
    <property type="protein sequence ID" value="TraesLAC7D03G04227180.1.CDS1"/>
    <property type="gene ID" value="TraesLAC7D03G04227180"/>
</dbReference>
<dbReference type="Gramene" id="TraesLDM7D03G04286100.1">
    <property type="protein sequence ID" value="TraesLDM7D03G04286100.1.CDS1"/>
    <property type="gene ID" value="TraesLDM7D03G04286100"/>
</dbReference>
<dbReference type="Gramene" id="TraesMAC7D03G04272630.1">
    <property type="protein sequence ID" value="TraesMAC7D03G04272630.1.CDS1"/>
    <property type="gene ID" value="TraesMAC7D03G04272630"/>
</dbReference>
<dbReference type="Gramene" id="TraesNOR7D03G04328810.1">
    <property type="protein sequence ID" value="TraesNOR7D03G04328810.1.CDS1"/>
    <property type="gene ID" value="TraesNOR7D03G04328810"/>
</dbReference>
<dbReference type="Gramene" id="TraesPARA_EIv1.0_2510310.1">
    <property type="protein sequence ID" value="TraesPARA_EIv1.0_2510310.1.CDS1"/>
    <property type="gene ID" value="TraesPARA_EIv1.0_2510310"/>
</dbReference>
<dbReference type="Gramene" id="TraesROB_scaffold_121866_01G000200.1">
    <property type="protein sequence ID" value="TraesROB_scaffold_121866_01G000200.1"/>
    <property type="gene ID" value="TraesROB_scaffold_121866_01G000200"/>
</dbReference>
<dbReference type="Gramene" id="TraesSTA7D03G04274040.1">
    <property type="protein sequence ID" value="TraesSTA7D03G04274040.1.CDS1"/>
    <property type="gene ID" value="TraesSTA7D03G04274040"/>
</dbReference>
<dbReference type="Gramene" id="TraesSYM7D03G04333760.1">
    <property type="protein sequence ID" value="TraesSYM7D03G04333760.1.CDS1"/>
    <property type="gene ID" value="TraesSYM7D03G04333760"/>
</dbReference>
<dbReference type="Gramene" id="TraesWEE_scaffold_113321_01G000200.1">
    <property type="protein sequence ID" value="TraesWEE_scaffold_113321_01G000200.1"/>
    <property type="gene ID" value="TraesWEE_scaffold_113321_01G000200"/>
</dbReference>
<dbReference type="OMA" id="SMCSIYI"/>
<dbReference type="OrthoDB" id="692815at2759"/>
<dbReference type="Proteomes" id="UP000019116">
    <property type="component" value="Chromosome 7D"/>
</dbReference>
<dbReference type="ExpressionAtlas" id="A5A4L4">
    <property type="expression patterns" value="baseline and differential"/>
</dbReference>
<dbReference type="GO" id="GO:0045735">
    <property type="term" value="F:nutrient reservoir activity"/>
    <property type="evidence" value="ECO:0007669"/>
    <property type="project" value="UniProtKB-KW"/>
</dbReference>
<dbReference type="CDD" id="cd00261">
    <property type="entry name" value="AAI_SS"/>
    <property type="match status" value="2"/>
</dbReference>
<dbReference type="Gene3D" id="1.10.110.10">
    <property type="entry name" value="Plant lipid-transfer and hydrophobic proteins"/>
    <property type="match status" value="2"/>
</dbReference>
<dbReference type="InterPro" id="IPR036312">
    <property type="entry name" value="Bifun_inhib/LTP/seed_sf"/>
</dbReference>
<dbReference type="InterPro" id="IPR016140">
    <property type="entry name" value="Bifunc_inhib/LTP/seed_store"/>
</dbReference>
<dbReference type="InterPro" id="IPR001954">
    <property type="entry name" value="Glia_glutenin"/>
</dbReference>
<dbReference type="PANTHER" id="PTHR33454:SF11">
    <property type="entry name" value="AVENIN-LIKE B5"/>
    <property type="match status" value="1"/>
</dbReference>
<dbReference type="PANTHER" id="PTHR33454">
    <property type="entry name" value="PROLAMIN PPROL 14P"/>
    <property type="match status" value="1"/>
</dbReference>
<dbReference type="Pfam" id="PF13016">
    <property type="entry name" value="Gliadin"/>
    <property type="match status" value="2"/>
</dbReference>
<dbReference type="PRINTS" id="PR00208">
    <property type="entry name" value="GLIADGLUTEN"/>
</dbReference>
<dbReference type="PRINTS" id="PR00209">
    <property type="entry name" value="GLIADIN"/>
</dbReference>
<dbReference type="SMART" id="SM00499">
    <property type="entry name" value="AAI"/>
    <property type="match status" value="2"/>
</dbReference>
<dbReference type="SUPFAM" id="SSF47699">
    <property type="entry name" value="Bifunctional inhibitor/lipid-transfer protein/seed storage 2S albumin"/>
    <property type="match status" value="2"/>
</dbReference>
<evidence type="ECO:0000250" key="1"/>
<evidence type="ECO:0000255" key="2"/>
<evidence type="ECO:0000305" key="3"/>
<sequence>MKVFILALLALAATTAIAQLETTCSQGFGQSQQQQQPGQRQLLEQMKPCVAFLQQKCSPLRMPFLQTQVEQLSSCQIVQYQCCQQLAQIPERTRCHAIHIVVEAIIQQQSQQQWQEPQQQAQHKSMRMLLENLSLMCNIYVPVQCQQQQQLGQQQQQQLQEQLTPCTTFLQQQCSPVTVPFPQIPVDQPTSCQNVQHQCCRQLSQIPEQFRCQAIHNVAEAIRQQQPQQQWQGMYQPQQPAQLESIRMSLQALRSMCSIYIPVQCPAPTTYNIPLVATYTGGAC</sequence>
<organism>
    <name type="scientific">Triticum aestivum</name>
    <name type="common">Wheat</name>
    <dbReference type="NCBI Taxonomy" id="4565"/>
    <lineage>
        <taxon>Eukaryota</taxon>
        <taxon>Viridiplantae</taxon>
        <taxon>Streptophyta</taxon>
        <taxon>Embryophyta</taxon>
        <taxon>Tracheophyta</taxon>
        <taxon>Spermatophyta</taxon>
        <taxon>Magnoliopsida</taxon>
        <taxon>Liliopsida</taxon>
        <taxon>Poales</taxon>
        <taxon>Poaceae</taxon>
        <taxon>BOP clade</taxon>
        <taxon>Pooideae</taxon>
        <taxon>Triticodae</taxon>
        <taxon>Triticeae</taxon>
        <taxon>Triticinae</taxon>
        <taxon>Triticum</taxon>
    </lineage>
</organism>
<keyword id="KW-1015">Disulfide bond</keyword>
<keyword id="KW-1185">Reference proteome</keyword>
<keyword id="KW-0708">Seed storage protein</keyword>
<keyword id="KW-0732">Signal</keyword>
<keyword id="KW-0758">Storage protein</keyword>
<reference key="1">
    <citation type="submission" date="2007-03" db="EMBL/GenBank/DDBJ databases">
        <title>Gene cloning and expression of avenin-like protein of wheat.</title>
        <authorList>
            <person name="Wang Y.S."/>
            <person name="Shi C.X."/>
            <person name="Zhan T.L."/>
            <person name="Cheng P."/>
            <person name="He G.Y."/>
        </authorList>
    </citation>
    <scope>NUCLEOTIDE SEQUENCE [GENOMIC DNA]</scope>
    <source>
        <strain>cv. Emai 18</strain>
    </source>
</reference>
<reference key="2">
    <citation type="submission" date="2009-09" db="EMBL/GenBank/DDBJ databases">
        <title>Molecular cloning and prokaryotic expression of avenin-like genes in wheat variety 'Shaan253'.</title>
        <authorList>
            <person name="Chen R."/>
            <person name="Wang M."/>
            <person name="Li M."/>
            <person name="Li Y."/>
            <person name="Chen Q."/>
            <person name="Gao X."/>
        </authorList>
    </citation>
    <scope>NUCLEOTIDE SEQUENCE [GENOMIC DNA]</scope>
    <source>
        <strain>cv. Shaan253</strain>
    </source>
</reference>
<reference key="3">
    <citation type="submission" date="2010-03" db="EMBL/GenBank/DDBJ databases">
        <title>Effect of avenin-like genes on gluten elasticity of wheat.</title>
        <authorList>
            <person name="Wang H.W."/>
            <person name="Ma F.Y."/>
            <person name="Wang Y.S."/>
            <person name="He G.Y."/>
        </authorList>
    </citation>
    <scope>NUCLEOTIDE SEQUENCE [GENOMIC DNA]</scope>
</reference>
<feature type="signal peptide" evidence="2">
    <location>
        <begin position="1"/>
        <end position="18"/>
    </location>
</feature>
<feature type="chain" id="PRO_0000410687" description="Avenin-like b6">
    <location>
        <begin position="19"/>
        <end position="284"/>
    </location>
</feature>
<comment type="function">
    <text evidence="1">Seed storage protein. Might be integrated via inter-chain disulfide bonds within the glutenin polymer (By similarity).</text>
</comment>
<comment type="PTM">
    <text evidence="3">Contains disulfide bonds.</text>
</comment>
<comment type="similarity">
    <text evidence="3">Belongs to the prolamin family.</text>
</comment>
<name>AVLB6_WHEAT</name>
<protein>
    <recommendedName>
        <fullName>Avenin-like b6</fullName>
    </recommendedName>
    <alternativeName>
        <fullName>Avenin-like protein s1</fullName>
    </alternativeName>
</protein>